<accession>Q0AE64</accession>
<reference key="1">
    <citation type="journal article" date="2007" name="Environ. Microbiol.">
        <title>Whole-genome analysis of the ammonia-oxidizing bacterium, Nitrosomonas eutropha C91: implications for niche adaptation.</title>
        <authorList>
            <person name="Stein L.Y."/>
            <person name="Arp D.J."/>
            <person name="Berube P.M."/>
            <person name="Chain P.S."/>
            <person name="Hauser L."/>
            <person name="Jetten M.S."/>
            <person name="Klotz M.G."/>
            <person name="Larimer F.W."/>
            <person name="Norton J.M."/>
            <person name="Op den Camp H.J.M."/>
            <person name="Shin M."/>
            <person name="Wei X."/>
        </authorList>
    </citation>
    <scope>NUCLEOTIDE SEQUENCE [LARGE SCALE GENOMIC DNA]</scope>
    <source>
        <strain>DSM 101675 / C91 / Nm57</strain>
    </source>
</reference>
<sequence length="99" mass="11243">MGWYCLDRDHNLILKLYIQPGARQTEAIGVHGEELKIKLAAPPMDGKANRALAVFLAKRFNVPLKHITLKWGAQSRHKVVEIYQPVNGPEVLFNEIRAE</sequence>
<proteinExistence type="inferred from homology"/>
<name>Y2146_NITEC</name>
<feature type="chain" id="PRO_1000056776" description="UPF0235 protein Neut_2146">
    <location>
        <begin position="1"/>
        <end position="99"/>
    </location>
</feature>
<organism>
    <name type="scientific">Nitrosomonas eutropha (strain DSM 101675 / C91 / Nm57)</name>
    <dbReference type="NCBI Taxonomy" id="335283"/>
    <lineage>
        <taxon>Bacteria</taxon>
        <taxon>Pseudomonadati</taxon>
        <taxon>Pseudomonadota</taxon>
        <taxon>Betaproteobacteria</taxon>
        <taxon>Nitrosomonadales</taxon>
        <taxon>Nitrosomonadaceae</taxon>
        <taxon>Nitrosomonas</taxon>
    </lineage>
</organism>
<evidence type="ECO:0000255" key="1">
    <source>
        <dbReference type="HAMAP-Rule" id="MF_00634"/>
    </source>
</evidence>
<gene>
    <name type="ordered locus">Neut_2146</name>
</gene>
<comment type="similarity">
    <text evidence="1">Belongs to the UPF0235 family.</text>
</comment>
<protein>
    <recommendedName>
        <fullName evidence="1">UPF0235 protein Neut_2146</fullName>
    </recommendedName>
</protein>
<dbReference type="EMBL" id="CP000450">
    <property type="protein sequence ID" value="ABI60368.1"/>
    <property type="molecule type" value="Genomic_DNA"/>
</dbReference>
<dbReference type="RefSeq" id="WP_011635165.1">
    <property type="nucleotide sequence ID" value="NC_008344.1"/>
</dbReference>
<dbReference type="SMR" id="Q0AE64"/>
<dbReference type="STRING" id="335283.Neut_2146"/>
<dbReference type="KEGG" id="net:Neut_2146"/>
<dbReference type="eggNOG" id="COG1872">
    <property type="taxonomic scope" value="Bacteria"/>
</dbReference>
<dbReference type="HOGENOM" id="CLU_130694_5_0_4"/>
<dbReference type="OrthoDB" id="9800587at2"/>
<dbReference type="Proteomes" id="UP000001966">
    <property type="component" value="Chromosome"/>
</dbReference>
<dbReference type="GO" id="GO:0005737">
    <property type="term" value="C:cytoplasm"/>
    <property type="evidence" value="ECO:0007669"/>
    <property type="project" value="TreeGrafter"/>
</dbReference>
<dbReference type="Gene3D" id="3.30.1200.10">
    <property type="entry name" value="YggU-like"/>
    <property type="match status" value="1"/>
</dbReference>
<dbReference type="HAMAP" id="MF_00634">
    <property type="entry name" value="UPF0235"/>
    <property type="match status" value="1"/>
</dbReference>
<dbReference type="InterPro" id="IPR003746">
    <property type="entry name" value="DUF167"/>
</dbReference>
<dbReference type="InterPro" id="IPR036591">
    <property type="entry name" value="YggU-like_sf"/>
</dbReference>
<dbReference type="NCBIfam" id="TIGR00251">
    <property type="entry name" value="DUF167 family protein"/>
    <property type="match status" value="1"/>
</dbReference>
<dbReference type="PANTHER" id="PTHR13420">
    <property type="entry name" value="UPF0235 PROTEIN C15ORF40"/>
    <property type="match status" value="1"/>
</dbReference>
<dbReference type="PANTHER" id="PTHR13420:SF7">
    <property type="entry name" value="UPF0235 PROTEIN C15ORF40"/>
    <property type="match status" value="1"/>
</dbReference>
<dbReference type="Pfam" id="PF02594">
    <property type="entry name" value="DUF167"/>
    <property type="match status" value="1"/>
</dbReference>
<dbReference type="SMART" id="SM01152">
    <property type="entry name" value="DUF167"/>
    <property type="match status" value="1"/>
</dbReference>
<dbReference type="SUPFAM" id="SSF69786">
    <property type="entry name" value="YggU-like"/>
    <property type="match status" value="1"/>
</dbReference>